<evidence type="ECO:0000255" key="1">
    <source>
        <dbReference type="HAMAP-Rule" id="MF_00705"/>
    </source>
</evidence>
<keyword id="KW-0378">Hydrolase</keyword>
<keyword id="KW-0658">Purine biosynthesis</keyword>
<keyword id="KW-1185">Reference proteome</keyword>
<dbReference type="EC" id="3.5.4.10" evidence="1"/>
<dbReference type="EMBL" id="CP000477">
    <property type="protein sequence ID" value="ABK15411.1"/>
    <property type="molecule type" value="Genomic_DNA"/>
</dbReference>
<dbReference type="RefSeq" id="WP_011696789.1">
    <property type="nucleotide sequence ID" value="NC_008553.1"/>
</dbReference>
<dbReference type="SMR" id="A0B9N7"/>
<dbReference type="STRING" id="349307.Mthe_1644"/>
<dbReference type="GeneID" id="4462516"/>
<dbReference type="KEGG" id="mtp:Mthe_1644"/>
<dbReference type="HOGENOM" id="CLU_1352116_0_0_2"/>
<dbReference type="OrthoDB" id="92928at2157"/>
<dbReference type="UniPathway" id="UPA00074">
    <property type="reaction ID" value="UER00135"/>
</dbReference>
<dbReference type="Proteomes" id="UP000000674">
    <property type="component" value="Chromosome"/>
</dbReference>
<dbReference type="GO" id="GO:0003937">
    <property type="term" value="F:IMP cyclohydrolase activity"/>
    <property type="evidence" value="ECO:0007669"/>
    <property type="project" value="UniProtKB-UniRule"/>
</dbReference>
<dbReference type="GO" id="GO:0006189">
    <property type="term" value="P:'de novo' IMP biosynthetic process"/>
    <property type="evidence" value="ECO:0007669"/>
    <property type="project" value="UniProtKB-UniRule"/>
</dbReference>
<dbReference type="Gene3D" id="3.60.20.20">
    <property type="entry name" value="Inosine monophosphate cyclohydrolase-like"/>
    <property type="match status" value="1"/>
</dbReference>
<dbReference type="HAMAP" id="MF_00705">
    <property type="entry name" value="IMP_cyclohydrol"/>
    <property type="match status" value="1"/>
</dbReference>
<dbReference type="InterPro" id="IPR010191">
    <property type="entry name" value="IMP_cyclohydrolase"/>
</dbReference>
<dbReference type="InterPro" id="IPR020600">
    <property type="entry name" value="IMP_cyclohydrolase-like"/>
</dbReference>
<dbReference type="InterPro" id="IPR036795">
    <property type="entry name" value="IMP_cyclohydrolase-like_sf"/>
</dbReference>
<dbReference type="NCBIfam" id="NF003167">
    <property type="entry name" value="PRK04151.1"/>
    <property type="match status" value="1"/>
</dbReference>
<dbReference type="NCBIfam" id="TIGR01922">
    <property type="entry name" value="purO_arch"/>
    <property type="match status" value="1"/>
</dbReference>
<dbReference type="Pfam" id="PF07826">
    <property type="entry name" value="IMP_cyclohyd"/>
    <property type="match status" value="1"/>
</dbReference>
<dbReference type="PIRSF" id="PIRSF004866">
    <property type="entry name" value="IMP_cclhdr_arch"/>
    <property type="match status" value="1"/>
</dbReference>
<dbReference type="SUPFAM" id="SSF75569">
    <property type="entry name" value="Archaeal IMP cyclohydrolase PurO"/>
    <property type="match status" value="1"/>
</dbReference>
<protein>
    <recommendedName>
        <fullName evidence="1">IMP cyclohydrolase</fullName>
        <ecNumber evidence="1">3.5.4.10</ecNumber>
    </recommendedName>
    <alternativeName>
        <fullName evidence="1">IMP synthase</fullName>
    </alternativeName>
    <alternativeName>
        <fullName evidence="1">Inosinicase</fullName>
    </alternativeName>
</protein>
<accession>A0B9N7</accession>
<comment type="function">
    <text evidence="1">Catalyzes the cyclization of 5-formylamidoimidazole-4-carboxamide ribonucleotide to IMP.</text>
</comment>
<comment type="catalytic activity">
    <reaction evidence="1">
        <text>IMP + H2O = 5-formamido-1-(5-phospho-D-ribosyl)imidazole-4-carboxamide</text>
        <dbReference type="Rhea" id="RHEA:18445"/>
        <dbReference type="ChEBI" id="CHEBI:15377"/>
        <dbReference type="ChEBI" id="CHEBI:58053"/>
        <dbReference type="ChEBI" id="CHEBI:58467"/>
        <dbReference type="EC" id="3.5.4.10"/>
    </reaction>
</comment>
<comment type="pathway">
    <text evidence="1">Purine metabolism; IMP biosynthesis via de novo pathway; IMP from 5-formamido-1-(5-phospho-D-ribosyl)imidazole-4-carboxamide: step 1/1.</text>
</comment>
<comment type="similarity">
    <text evidence="1">Belongs to the archaeal IMP cyclohydrolase family.</text>
</comment>
<feature type="chain" id="PRO_0000349167" description="IMP cyclohydrolase">
    <location>
        <begin position="1"/>
        <end position="199"/>
    </location>
</feature>
<organism>
    <name type="scientific">Methanothrix thermoacetophila (strain DSM 6194 / JCM 14653 / NBRC 101360 / PT)</name>
    <name type="common">Methanosaeta thermophila</name>
    <dbReference type="NCBI Taxonomy" id="349307"/>
    <lineage>
        <taxon>Archaea</taxon>
        <taxon>Methanobacteriati</taxon>
        <taxon>Methanobacteriota</taxon>
        <taxon>Stenosarchaea group</taxon>
        <taxon>Methanomicrobia</taxon>
        <taxon>Methanotrichales</taxon>
        <taxon>Methanotrichaceae</taxon>
        <taxon>Methanothrix</taxon>
    </lineage>
</organism>
<sequence>MYVGRIVAVGCSGDAVWVGYRVSSRSFPNRRATASGSSVFVHPVDPSDVLKNPYITYPCIRASNDFAVVSNGDHTDMIFDRIEDGSGPLDAVALSLVAYGYERDDLRTPRIAGVVSGRSAVLGIAAHDEIRVRKIELQDGDAWMVATYEKTGFEPVSMEGASASSIARSLFGLPFERPVCSAAAFRRDDGFELAVYNPR</sequence>
<name>PURO_METTP</name>
<proteinExistence type="inferred from homology"/>
<gene>
    <name evidence="1" type="primary">purO</name>
    <name type="ordered locus">Mthe_1644</name>
</gene>
<reference key="1">
    <citation type="submission" date="2006-10" db="EMBL/GenBank/DDBJ databases">
        <title>Complete sequence of Methanosaeta thermophila PT.</title>
        <authorList>
            <consortium name="US DOE Joint Genome Institute"/>
            <person name="Copeland A."/>
            <person name="Lucas S."/>
            <person name="Lapidus A."/>
            <person name="Barry K."/>
            <person name="Detter J.C."/>
            <person name="Glavina del Rio T."/>
            <person name="Hammon N."/>
            <person name="Israni S."/>
            <person name="Pitluck S."/>
            <person name="Chain P."/>
            <person name="Malfatti S."/>
            <person name="Shin M."/>
            <person name="Vergez L."/>
            <person name="Schmutz J."/>
            <person name="Larimer F."/>
            <person name="Land M."/>
            <person name="Hauser L."/>
            <person name="Kyrpides N."/>
            <person name="Kim E."/>
            <person name="Smith K.S."/>
            <person name="Ingram-Smith C."/>
            <person name="Richardson P."/>
        </authorList>
    </citation>
    <scope>NUCLEOTIDE SEQUENCE [LARGE SCALE GENOMIC DNA]</scope>
    <source>
        <strain>DSM 6194 / JCM 14653 / NBRC 101360 / PT</strain>
    </source>
</reference>